<feature type="chain" id="PRO_0000183208" description="UDP-glucose 4-epimerase">
    <location>
        <begin position="1"/>
        <end position="330"/>
    </location>
</feature>
<feature type="active site" description="Proton acceptor" evidence="1">
    <location>
        <position position="141"/>
    </location>
</feature>
<feature type="binding site" evidence="1">
    <location>
        <begin position="11"/>
        <end position="12"/>
    </location>
    <ligand>
        <name>NAD(+)</name>
        <dbReference type="ChEBI" id="CHEBI:57540"/>
    </ligand>
</feature>
<feature type="binding site" evidence="1">
    <location>
        <begin position="31"/>
        <end position="36"/>
    </location>
    <ligand>
        <name>NAD(+)</name>
        <dbReference type="ChEBI" id="CHEBI:57540"/>
    </ligand>
</feature>
<feature type="binding site" evidence="1">
    <location>
        <begin position="51"/>
        <end position="52"/>
    </location>
    <ligand>
        <name>NAD(+)</name>
        <dbReference type="ChEBI" id="CHEBI:57540"/>
    </ligand>
</feature>
<feature type="binding site" evidence="1">
    <location>
        <begin position="73"/>
        <end position="77"/>
    </location>
    <ligand>
        <name>NAD(+)</name>
        <dbReference type="ChEBI" id="CHEBI:57540"/>
    </ligand>
</feature>
<feature type="binding site" evidence="1">
    <location>
        <position position="92"/>
    </location>
    <ligand>
        <name>NAD(+)</name>
        <dbReference type="ChEBI" id="CHEBI:57540"/>
    </ligand>
</feature>
<feature type="binding site" evidence="1">
    <location>
        <position position="117"/>
    </location>
    <ligand>
        <name>NAD(+)</name>
        <dbReference type="ChEBI" id="CHEBI:57540"/>
    </ligand>
</feature>
<feature type="binding site" evidence="1">
    <location>
        <position position="117"/>
    </location>
    <ligand>
        <name>substrate</name>
    </ligand>
</feature>
<feature type="binding site" evidence="1">
    <location>
        <position position="141"/>
    </location>
    <ligand>
        <name>NAD(+)</name>
        <dbReference type="ChEBI" id="CHEBI:57540"/>
    </ligand>
</feature>
<feature type="binding site" evidence="1">
    <location>
        <position position="141"/>
    </location>
    <ligand>
        <name>substrate</name>
    </ligand>
</feature>
<feature type="binding site" evidence="1">
    <location>
        <position position="145"/>
    </location>
    <ligand>
        <name>NAD(+)</name>
        <dbReference type="ChEBI" id="CHEBI:57540"/>
    </ligand>
</feature>
<feature type="binding site" evidence="1">
    <location>
        <position position="169"/>
    </location>
    <ligand>
        <name>NAD(+)</name>
        <dbReference type="ChEBI" id="CHEBI:57540"/>
    </ligand>
</feature>
<feature type="binding site" evidence="1">
    <location>
        <position position="170"/>
    </location>
    <ligand>
        <name>substrate</name>
    </ligand>
</feature>
<feature type="binding site" evidence="1">
    <location>
        <begin position="189"/>
        <end position="190"/>
    </location>
    <ligand>
        <name>substrate</name>
    </ligand>
</feature>
<feature type="binding site" evidence="1">
    <location>
        <begin position="206"/>
        <end position="208"/>
    </location>
    <ligand>
        <name>substrate</name>
    </ligand>
</feature>
<feature type="binding site" evidence="1">
    <location>
        <position position="221"/>
    </location>
    <ligand>
        <name>substrate</name>
    </ligand>
</feature>
<feature type="binding site" evidence="1">
    <location>
        <begin position="282"/>
        <end position="285"/>
    </location>
    <ligand>
        <name>substrate</name>
    </ligand>
</feature>
<comment type="function">
    <text evidence="2">Involved in the metabolism of galactose. Catalyzes the conversion of UDP-galactose (UDP-Gal) to UDP-glucose (UDP-Glc) through a mechanism involving the transient reduction of NAD. It also could be involved in preparation of carbohydrate residues for incorporation into complex polymers, such as exopolysaccharides.</text>
</comment>
<comment type="catalytic activity">
    <reaction>
        <text>UDP-alpha-D-glucose = UDP-alpha-D-galactose</text>
        <dbReference type="Rhea" id="RHEA:22168"/>
        <dbReference type="ChEBI" id="CHEBI:58885"/>
        <dbReference type="ChEBI" id="CHEBI:66914"/>
        <dbReference type="EC" id="5.1.3.2"/>
    </reaction>
</comment>
<comment type="cofactor">
    <cofactor evidence="1">
        <name>NAD(+)</name>
        <dbReference type="ChEBI" id="CHEBI:57540"/>
    </cofactor>
</comment>
<comment type="pathway">
    <text>Carbohydrate metabolism; galactose metabolism.</text>
</comment>
<comment type="subunit">
    <text evidence="1">Homodimer.</text>
</comment>
<comment type="induction">
    <text>Seems to be constitutively expressed.</text>
</comment>
<comment type="similarity">
    <text evidence="3">Belongs to the NAD(P)-dependent epimerase/dehydratase family.</text>
</comment>
<accession>Q7WTB1</accession>
<keyword id="KW-0119">Carbohydrate metabolism</keyword>
<keyword id="KW-0299">Galactose metabolism</keyword>
<keyword id="KW-0413">Isomerase</keyword>
<keyword id="KW-0520">NAD</keyword>
<gene>
    <name type="primary">galE</name>
</gene>
<proteinExistence type="evidence at transcript level"/>
<reference key="1">
    <citation type="journal article" date="2003" name="Appl. Environ. Microbiol.">
        <title>Unusual organization for lactose and galactose gene clusters in Lactobacillus helveticus.</title>
        <authorList>
            <person name="Fortina M.G."/>
            <person name="Ricci G."/>
            <person name="Mora D."/>
            <person name="Guglielmetti S."/>
            <person name="Manachini P.L."/>
        </authorList>
    </citation>
    <scope>NUCLEOTIDE SEQUENCE [GENOMIC DNA]</scope>
    <scope>FUNCTION</scope>
    <scope>TRANSCRIPTIONAL EXPRESSION</scope>
    <source>
        <strain>ATCC 15009 / DSM 20075 / BCRC 12936 / JCM 1120 / NBRC 15019 / NCIMB 11971 / NRRL B-4526 / Lh12</strain>
    </source>
</reference>
<organism>
    <name type="scientific">Lactobacillus helveticus</name>
    <name type="common">Lactobacillus suntoryeus</name>
    <dbReference type="NCBI Taxonomy" id="1587"/>
    <lineage>
        <taxon>Bacteria</taxon>
        <taxon>Bacillati</taxon>
        <taxon>Bacillota</taxon>
        <taxon>Bacilli</taxon>
        <taxon>Lactobacillales</taxon>
        <taxon>Lactobacillaceae</taxon>
        <taxon>Lactobacillus</taxon>
    </lineage>
</organism>
<protein>
    <recommendedName>
        <fullName>UDP-glucose 4-epimerase</fullName>
        <ecNumber>5.1.3.2</ecNumber>
    </recommendedName>
    <alternativeName>
        <fullName>Galactowaldenase</fullName>
    </alternativeName>
    <alternativeName>
        <fullName>UDP-galactose 4-epimerase</fullName>
    </alternativeName>
</protein>
<dbReference type="EC" id="5.1.3.2"/>
<dbReference type="EMBL" id="AJ512879">
    <property type="protein sequence ID" value="CAD55502.1"/>
    <property type="molecule type" value="Genomic_DNA"/>
</dbReference>
<dbReference type="SMR" id="Q7WTB1"/>
<dbReference type="eggNOG" id="COG1087">
    <property type="taxonomic scope" value="Bacteria"/>
</dbReference>
<dbReference type="UniPathway" id="UPA00214"/>
<dbReference type="GO" id="GO:0003978">
    <property type="term" value="F:UDP-glucose 4-epimerase activity"/>
    <property type="evidence" value="ECO:0007669"/>
    <property type="project" value="UniProtKB-EC"/>
</dbReference>
<dbReference type="GO" id="GO:0033499">
    <property type="term" value="P:galactose catabolic process via UDP-galactose, Leloir pathway"/>
    <property type="evidence" value="ECO:0007669"/>
    <property type="project" value="TreeGrafter"/>
</dbReference>
<dbReference type="CDD" id="cd05247">
    <property type="entry name" value="UDP_G4E_1_SDR_e"/>
    <property type="match status" value="1"/>
</dbReference>
<dbReference type="Gene3D" id="3.40.50.720">
    <property type="entry name" value="NAD(P)-binding Rossmann-like Domain"/>
    <property type="match status" value="1"/>
</dbReference>
<dbReference type="Gene3D" id="3.90.25.10">
    <property type="entry name" value="UDP-galactose 4-epimerase, domain 1"/>
    <property type="match status" value="1"/>
</dbReference>
<dbReference type="InterPro" id="IPR001509">
    <property type="entry name" value="Epimerase_deHydtase"/>
</dbReference>
<dbReference type="InterPro" id="IPR036291">
    <property type="entry name" value="NAD(P)-bd_dom_sf"/>
</dbReference>
<dbReference type="InterPro" id="IPR005886">
    <property type="entry name" value="UDP_G4E"/>
</dbReference>
<dbReference type="NCBIfam" id="TIGR01179">
    <property type="entry name" value="galE"/>
    <property type="match status" value="1"/>
</dbReference>
<dbReference type="PANTHER" id="PTHR43725:SF53">
    <property type="entry name" value="UDP-ARABINOSE 4-EPIMERASE 1"/>
    <property type="match status" value="1"/>
</dbReference>
<dbReference type="PANTHER" id="PTHR43725">
    <property type="entry name" value="UDP-GLUCOSE 4-EPIMERASE"/>
    <property type="match status" value="1"/>
</dbReference>
<dbReference type="Pfam" id="PF01370">
    <property type="entry name" value="Epimerase"/>
    <property type="match status" value="1"/>
</dbReference>
<dbReference type="SUPFAM" id="SSF51735">
    <property type="entry name" value="NAD(P)-binding Rossmann-fold domains"/>
    <property type="match status" value="1"/>
</dbReference>
<sequence length="330" mass="36429">MKVLVIGGAGYIGSHAVRELVKEGNDVLVLDALYTGHRKAVDPKAKFYQGDIEDTFLVSKILRDEKIDAVMHFAAYSLVPESVKKPLKYYDNNVTGMISLLQAMNDANVKYLVFSSSAATYGIPKKLPITEDTPLNPINPYGETKMMMEKIMAWADKADGIKYTALRYFNVAGASSDGSIGEDHAPETHLIPNILKSAISGDGKFTIFGDDYDTKDGTNVRDYVQVEDLIDAHILALKHMMKTNKSDVFNLGTAHGYSNLEILESAKKVTGIDIPYTMGPRRGGDPDSLVADSTKARTVLGWKPKHENVDDVIATAWKWHKSHPKGYEDK</sequence>
<evidence type="ECO:0000250" key="1"/>
<evidence type="ECO:0000269" key="2">
    <source>
    </source>
</evidence>
<evidence type="ECO:0000305" key="3"/>
<name>GALE_LACHE</name>